<sequence>MAKAELRKPKPKSNPLKAADITVIDYKDVALLRKFISDRGKIRARRVTGVTVQEQRKIAQAIKNAREVALLPYSGAGRG</sequence>
<proteinExistence type="inferred from homology"/>
<comment type="function">
    <text evidence="1">Binds as a heterodimer with protein bS6 to the central domain of the 16S rRNA, where it helps stabilize the platform of the 30S subunit.</text>
</comment>
<comment type="subunit">
    <text evidence="1">Part of the 30S ribosomal subunit. Forms a tight heterodimer with protein bS6.</text>
</comment>
<comment type="similarity">
    <text evidence="1">Belongs to the bacterial ribosomal protein bS18 family.</text>
</comment>
<accession>A0K2H3</accession>
<feature type="chain" id="PRO_0000345441" description="Small ribosomal subunit protein bS18">
    <location>
        <begin position="1"/>
        <end position="79"/>
    </location>
</feature>
<dbReference type="EMBL" id="CP000454">
    <property type="protein sequence ID" value="ABK05493.1"/>
    <property type="molecule type" value="Genomic_DNA"/>
</dbReference>
<dbReference type="RefSeq" id="WP_003800144.1">
    <property type="nucleotide sequence ID" value="NC_008541.1"/>
</dbReference>
<dbReference type="SMR" id="A0K2H3"/>
<dbReference type="STRING" id="290399.Arth_4118"/>
<dbReference type="GeneID" id="97423433"/>
<dbReference type="KEGG" id="art:Arth_4118"/>
<dbReference type="eggNOG" id="COG0238">
    <property type="taxonomic scope" value="Bacteria"/>
</dbReference>
<dbReference type="HOGENOM" id="CLU_148710_1_0_11"/>
<dbReference type="OrthoDB" id="9812008at2"/>
<dbReference type="Proteomes" id="UP000000754">
    <property type="component" value="Chromosome"/>
</dbReference>
<dbReference type="GO" id="GO:0022627">
    <property type="term" value="C:cytosolic small ribosomal subunit"/>
    <property type="evidence" value="ECO:0007669"/>
    <property type="project" value="TreeGrafter"/>
</dbReference>
<dbReference type="GO" id="GO:0070181">
    <property type="term" value="F:small ribosomal subunit rRNA binding"/>
    <property type="evidence" value="ECO:0007669"/>
    <property type="project" value="TreeGrafter"/>
</dbReference>
<dbReference type="GO" id="GO:0003735">
    <property type="term" value="F:structural constituent of ribosome"/>
    <property type="evidence" value="ECO:0007669"/>
    <property type="project" value="InterPro"/>
</dbReference>
<dbReference type="GO" id="GO:0006412">
    <property type="term" value="P:translation"/>
    <property type="evidence" value="ECO:0007669"/>
    <property type="project" value="UniProtKB-UniRule"/>
</dbReference>
<dbReference type="Gene3D" id="4.10.640.10">
    <property type="entry name" value="Ribosomal protein S18"/>
    <property type="match status" value="1"/>
</dbReference>
<dbReference type="HAMAP" id="MF_00270">
    <property type="entry name" value="Ribosomal_bS18"/>
    <property type="match status" value="1"/>
</dbReference>
<dbReference type="InterPro" id="IPR001648">
    <property type="entry name" value="Ribosomal_bS18"/>
</dbReference>
<dbReference type="InterPro" id="IPR018275">
    <property type="entry name" value="Ribosomal_bS18_CS"/>
</dbReference>
<dbReference type="InterPro" id="IPR036870">
    <property type="entry name" value="Ribosomal_bS18_sf"/>
</dbReference>
<dbReference type="NCBIfam" id="TIGR00165">
    <property type="entry name" value="S18"/>
    <property type="match status" value="1"/>
</dbReference>
<dbReference type="PANTHER" id="PTHR13479">
    <property type="entry name" value="30S RIBOSOMAL PROTEIN S18"/>
    <property type="match status" value="1"/>
</dbReference>
<dbReference type="PANTHER" id="PTHR13479:SF40">
    <property type="entry name" value="SMALL RIBOSOMAL SUBUNIT PROTEIN BS18M"/>
    <property type="match status" value="1"/>
</dbReference>
<dbReference type="Pfam" id="PF01084">
    <property type="entry name" value="Ribosomal_S18"/>
    <property type="match status" value="1"/>
</dbReference>
<dbReference type="PRINTS" id="PR00974">
    <property type="entry name" value="RIBOSOMALS18"/>
</dbReference>
<dbReference type="SUPFAM" id="SSF46911">
    <property type="entry name" value="Ribosomal protein S18"/>
    <property type="match status" value="1"/>
</dbReference>
<dbReference type="PROSITE" id="PS00057">
    <property type="entry name" value="RIBOSOMAL_S18"/>
    <property type="match status" value="1"/>
</dbReference>
<organism>
    <name type="scientific">Arthrobacter sp. (strain FB24)</name>
    <dbReference type="NCBI Taxonomy" id="290399"/>
    <lineage>
        <taxon>Bacteria</taxon>
        <taxon>Bacillati</taxon>
        <taxon>Actinomycetota</taxon>
        <taxon>Actinomycetes</taxon>
        <taxon>Micrococcales</taxon>
        <taxon>Micrococcaceae</taxon>
        <taxon>Arthrobacter</taxon>
    </lineage>
</organism>
<evidence type="ECO:0000255" key="1">
    <source>
        <dbReference type="HAMAP-Rule" id="MF_00270"/>
    </source>
</evidence>
<evidence type="ECO:0000305" key="2"/>
<gene>
    <name evidence="1" type="primary">rpsR</name>
    <name type="ordered locus">Arth_4118</name>
</gene>
<name>RS18_ARTS2</name>
<protein>
    <recommendedName>
        <fullName evidence="1">Small ribosomal subunit protein bS18</fullName>
    </recommendedName>
    <alternativeName>
        <fullName evidence="2">30S ribosomal protein S18</fullName>
    </alternativeName>
</protein>
<keyword id="KW-1185">Reference proteome</keyword>
<keyword id="KW-0687">Ribonucleoprotein</keyword>
<keyword id="KW-0689">Ribosomal protein</keyword>
<keyword id="KW-0694">RNA-binding</keyword>
<keyword id="KW-0699">rRNA-binding</keyword>
<reference key="1">
    <citation type="journal article" date="2013" name="Stand. Genomic Sci.">
        <title>Complete genome sequence of Arthrobacter sp. strain FB24.</title>
        <authorList>
            <person name="Nakatsu C.H."/>
            <person name="Barabote R."/>
            <person name="Thompson S."/>
            <person name="Bruce D."/>
            <person name="Detter C."/>
            <person name="Brettin T."/>
            <person name="Han C."/>
            <person name="Beasley F."/>
            <person name="Chen W."/>
            <person name="Konopka A."/>
            <person name="Xie G."/>
        </authorList>
    </citation>
    <scope>NUCLEOTIDE SEQUENCE [LARGE SCALE GENOMIC DNA]</scope>
    <source>
        <strain>FB24</strain>
    </source>
</reference>